<keyword id="KW-0378">Hydrolase</keyword>
<keyword id="KW-0479">Metal-binding</keyword>
<keyword id="KW-1185">Reference proteome</keyword>
<keyword id="KW-0862">Zinc</keyword>
<organism>
    <name type="scientific">Saccharolobus solfataricus (strain ATCC 35092 / DSM 1617 / JCM 11322 / P2)</name>
    <name type="common">Sulfolobus solfataricus</name>
    <dbReference type="NCBI Taxonomy" id="273057"/>
    <lineage>
        <taxon>Archaea</taxon>
        <taxon>Thermoproteota</taxon>
        <taxon>Thermoprotei</taxon>
        <taxon>Sulfolobales</taxon>
        <taxon>Sulfolobaceae</taxon>
        <taxon>Saccharolobus</taxon>
    </lineage>
</organism>
<evidence type="ECO:0000250" key="1">
    <source>
        <dbReference type="UniProtKB" id="G0WXL9"/>
    </source>
</evidence>
<evidence type="ECO:0000269" key="2">
    <source>
    </source>
</evidence>
<evidence type="ECO:0000303" key="3">
    <source>
    </source>
</evidence>
<evidence type="ECO:0000305" key="4"/>
<evidence type="ECO:0000312" key="5">
    <source>
        <dbReference type="EMBL" id="AAK41461.1"/>
    </source>
</evidence>
<accession>Q97YU3</accession>
<name>CS2H_SACS2</name>
<reference key="1">
    <citation type="journal article" date="2001" name="Proc. Natl. Acad. Sci. U.S.A.">
        <title>The complete genome of the crenarchaeon Sulfolobus solfataricus P2.</title>
        <authorList>
            <person name="She Q."/>
            <person name="Singh R.K."/>
            <person name="Confalonieri F."/>
            <person name="Zivanovic Y."/>
            <person name="Allard G."/>
            <person name="Awayez M.J."/>
            <person name="Chan-Weiher C.C.-Y."/>
            <person name="Clausen I.G."/>
            <person name="Curtis B.A."/>
            <person name="De Moors A."/>
            <person name="Erauso G."/>
            <person name="Fletcher C."/>
            <person name="Gordon P.M.K."/>
            <person name="Heikamp-de Jong I."/>
            <person name="Jeffries A.C."/>
            <person name="Kozera C.J."/>
            <person name="Medina N."/>
            <person name="Peng X."/>
            <person name="Thi-Ngoc H.P."/>
            <person name="Redder P."/>
            <person name="Schenk M.E."/>
            <person name="Theriault C."/>
            <person name="Tolstrup N."/>
            <person name="Charlebois R.L."/>
            <person name="Doolittle W.F."/>
            <person name="Duguet M."/>
            <person name="Gaasterland T."/>
            <person name="Garrett R.A."/>
            <person name="Ragan M.A."/>
            <person name="Sensen C.W."/>
            <person name="Van der Oost J."/>
        </authorList>
    </citation>
    <scope>NUCLEOTIDE SEQUENCE [LARGE SCALE GENOMIC DNA]</scope>
    <source>
        <strain>ATCC 35092 / DSM 1617 / JCM 11322 / P2</strain>
    </source>
</reference>
<reference key="2">
    <citation type="journal article" date="2011" name="Nature">
        <title>Evolution of a new enzyme for carbon disulphide conversion by an acidothermophilic archaeon.</title>
        <authorList>
            <person name="Smeulders M.J."/>
            <person name="Barends T.R."/>
            <person name="Pol A."/>
            <person name="Scherer A."/>
            <person name="Zandvoort M.H."/>
            <person name="Udvarhelyi A."/>
            <person name="Khadem A.F."/>
            <person name="Menzel A."/>
            <person name="Hermans J."/>
            <person name="Shoeman R.L."/>
            <person name="Wessels H.J."/>
            <person name="van den Heuvel L.P."/>
            <person name="Russ L."/>
            <person name="Schlichting I."/>
            <person name="Jetten M.S."/>
            <person name="Op den Camp H.J."/>
        </authorList>
    </citation>
    <scope>FUNCTION</scope>
    <scope>CATALYTIC ACTIVITY</scope>
    <scope>BIOPHYSICOCHEMICAL PROPERTIES</scope>
    <scope>SUBSTRATE SPECIFICITY</scope>
    <scope>PATHWAY</scope>
    <source>
        <strain>ATCC 35092 / DSM 1617 / JCM 11322 / P2</strain>
    </source>
</reference>
<protein>
    <recommendedName>
        <fullName evidence="3">Carbon disulfide hydrolase</fullName>
        <shortName evidence="3">CS(2) hydrolase</shortName>
        <ecNumber evidence="2">3.13.1.5</ecNumber>
    </recommendedName>
</protein>
<comment type="function">
    <text evidence="2">Catalyzes the conversion of carbon disulfide into hydrogen sulfide and carbon dioxide, with carbonyl sulfide as an intermediate. Likely plays a key role in sulfur metabolism in S.solfataricus. Does not show carbonic anhydrase activity (hydration of CO(2) to carbonate).</text>
</comment>
<comment type="catalytic activity">
    <reaction evidence="2">
        <text>carbon disulfide + 2 H2O = 2 hydrogen sulfide + CO2 + 2 H(+)</text>
        <dbReference type="Rhea" id="RHEA:38143"/>
        <dbReference type="ChEBI" id="CHEBI:15377"/>
        <dbReference type="ChEBI" id="CHEBI:15378"/>
        <dbReference type="ChEBI" id="CHEBI:16526"/>
        <dbReference type="ChEBI" id="CHEBI:23012"/>
        <dbReference type="ChEBI" id="CHEBI:29919"/>
        <dbReference type="EC" id="3.13.1.5"/>
    </reaction>
</comment>
<comment type="cofactor">
    <cofactor evidence="1">
        <name>Zn(2+)</name>
        <dbReference type="ChEBI" id="CHEBI:29105"/>
    </cofactor>
    <text evidence="1">Binds 1 zinc ion per subunit.</text>
</comment>
<comment type="biophysicochemical properties">
    <kinetics>
        <KM evidence="2">86 uM for carbon disulfide</KM>
        <Vmax evidence="2">96.0 nmol/min/ug enzyme towards hydrogen sulfide formation</Vmax>
    </kinetics>
</comment>
<comment type="pathway">
    <text evidence="2">Sulfur metabolism; hydrogen sulfide biosynthesis.</text>
</comment>
<comment type="subunit">
    <text evidence="1">Forms a hexadecameric catenane homooligomer, through interactions of two interlocked octameric rings.</text>
</comment>
<comment type="similarity">
    <text evidence="4">Belongs to the beta-class carbonic anhydrase family.</text>
</comment>
<dbReference type="EC" id="3.13.1.5" evidence="2"/>
<dbReference type="EMBL" id="AE006641">
    <property type="protein sequence ID" value="AAK41461.1"/>
    <property type="molecule type" value="Genomic_DNA"/>
</dbReference>
<dbReference type="PIR" id="F90275">
    <property type="entry name" value="F90275"/>
</dbReference>
<dbReference type="RefSeq" id="WP_010923252.1">
    <property type="nucleotide sequence ID" value="NC_002754.1"/>
</dbReference>
<dbReference type="SMR" id="Q97YU3"/>
<dbReference type="STRING" id="273057.SSO1214"/>
<dbReference type="PaxDb" id="273057-SSO1214"/>
<dbReference type="EnsemblBacteria" id="AAK41461">
    <property type="protein sequence ID" value="AAK41461"/>
    <property type="gene ID" value="SSO1214"/>
</dbReference>
<dbReference type="GeneID" id="1454240"/>
<dbReference type="KEGG" id="sso:SSO1214"/>
<dbReference type="PATRIC" id="fig|273057.12.peg.1214"/>
<dbReference type="eggNOG" id="arCOG02860">
    <property type="taxonomic scope" value="Archaea"/>
</dbReference>
<dbReference type="HOGENOM" id="CLU_084253_1_1_2"/>
<dbReference type="InParanoid" id="Q97YU3"/>
<dbReference type="PhylomeDB" id="Q97YU3"/>
<dbReference type="SABIO-RK" id="Q97YU3"/>
<dbReference type="UniPathway" id="UPA00140"/>
<dbReference type="Proteomes" id="UP000001974">
    <property type="component" value="Chromosome"/>
</dbReference>
<dbReference type="GO" id="GO:0004089">
    <property type="term" value="F:carbonate dehydratase activity"/>
    <property type="evidence" value="ECO:0007669"/>
    <property type="project" value="InterPro"/>
</dbReference>
<dbReference type="GO" id="GO:0016787">
    <property type="term" value="F:hydrolase activity"/>
    <property type="evidence" value="ECO:0007669"/>
    <property type="project" value="UniProtKB-KW"/>
</dbReference>
<dbReference type="GO" id="GO:0008270">
    <property type="term" value="F:zinc ion binding"/>
    <property type="evidence" value="ECO:0007669"/>
    <property type="project" value="InterPro"/>
</dbReference>
<dbReference type="GO" id="GO:0070814">
    <property type="term" value="P:hydrogen sulfide biosynthetic process"/>
    <property type="evidence" value="ECO:0007669"/>
    <property type="project" value="UniProtKB-UniPathway"/>
</dbReference>
<dbReference type="CDD" id="cd03379">
    <property type="entry name" value="beta_CA_cladeD"/>
    <property type="match status" value="1"/>
</dbReference>
<dbReference type="Gene3D" id="3.40.1050.10">
    <property type="entry name" value="Carbonic anhydrase"/>
    <property type="match status" value="1"/>
</dbReference>
<dbReference type="InterPro" id="IPR001765">
    <property type="entry name" value="Carbonic_anhydrase"/>
</dbReference>
<dbReference type="InterPro" id="IPR036874">
    <property type="entry name" value="Carbonic_anhydrase_sf"/>
</dbReference>
<dbReference type="PANTHER" id="PTHR43175:SF3">
    <property type="entry name" value="CARBON DISULFIDE HYDROLASE"/>
    <property type="match status" value="1"/>
</dbReference>
<dbReference type="PANTHER" id="PTHR43175">
    <property type="entry name" value="CARBONIC ANHYDRASE"/>
    <property type="match status" value="1"/>
</dbReference>
<dbReference type="Pfam" id="PF00484">
    <property type="entry name" value="Pro_CA"/>
    <property type="match status" value="1"/>
</dbReference>
<dbReference type="SMART" id="SM00947">
    <property type="entry name" value="Pro_CA"/>
    <property type="match status" value="1"/>
</dbReference>
<dbReference type="SUPFAM" id="SSF53056">
    <property type="entry name" value="beta-carbonic anhydrase, cab"/>
    <property type="match status" value="1"/>
</dbReference>
<proteinExistence type="evidence at protein level"/>
<sequence length="204" mass="23678">MISEYVDEEIKRREDYSLRRLKGIPNDRRLWILTCMDERVHVEEALGIRPEDAHIYRNAGGIVTDDAIRSASLTTNFFGTKEIIVITHTDCGMIRFTGDEVAKYFLDKGVKVNELQIDPLLPSLRLQSTEDFTKWFKFFRDLGANSPDDIALKNAEILKNHPLIPKNVTISAYVYEVETHKLRKPHQRLYELTSRFEHGTVVKE</sequence>
<feature type="chain" id="PRO_0000444998" description="Carbon disulfide hydrolase">
    <location>
        <begin position="1"/>
        <end position="204"/>
    </location>
</feature>
<feature type="binding site" evidence="1">
    <location>
        <position position="35"/>
    </location>
    <ligand>
        <name>Zn(2+)</name>
        <dbReference type="ChEBI" id="CHEBI:29105"/>
    </ligand>
</feature>
<feature type="binding site" evidence="1">
    <location>
        <position position="88"/>
    </location>
    <ligand>
        <name>Zn(2+)</name>
        <dbReference type="ChEBI" id="CHEBI:29105"/>
    </ligand>
</feature>
<feature type="binding site" evidence="1">
    <location>
        <position position="91"/>
    </location>
    <ligand>
        <name>Zn(2+)</name>
        <dbReference type="ChEBI" id="CHEBI:29105"/>
    </ligand>
</feature>
<gene>
    <name evidence="5" type="ordered locus">SSO1214</name>
</gene>